<name>CSN3_XENTR</name>
<feature type="chain" id="PRO_0000312649" description="COP9 signalosome complex subunit 3">
    <location>
        <begin position="1"/>
        <end position="423"/>
    </location>
</feature>
<feature type="domain" description="PCI" evidence="2">
    <location>
        <begin position="197"/>
        <end position="365"/>
    </location>
</feature>
<feature type="region of interest" description="Disordered" evidence="3">
    <location>
        <begin position="403"/>
        <end position="423"/>
    </location>
</feature>
<organism>
    <name type="scientific">Xenopus tropicalis</name>
    <name type="common">Western clawed frog</name>
    <name type="synonym">Silurana tropicalis</name>
    <dbReference type="NCBI Taxonomy" id="8364"/>
    <lineage>
        <taxon>Eukaryota</taxon>
        <taxon>Metazoa</taxon>
        <taxon>Chordata</taxon>
        <taxon>Craniata</taxon>
        <taxon>Vertebrata</taxon>
        <taxon>Euteleostomi</taxon>
        <taxon>Amphibia</taxon>
        <taxon>Batrachia</taxon>
        <taxon>Anura</taxon>
        <taxon>Pipoidea</taxon>
        <taxon>Pipidae</taxon>
        <taxon>Xenopodinae</taxon>
        <taxon>Xenopus</taxon>
        <taxon>Silurana</taxon>
    </lineage>
</organism>
<reference key="1">
    <citation type="submission" date="2006-10" db="EMBL/GenBank/DDBJ databases">
        <authorList>
            <consortium name="Sanger Xenopus tropicalis EST/cDNA project"/>
        </authorList>
    </citation>
    <scope>NUCLEOTIDE SEQUENCE [LARGE SCALE MRNA]</scope>
    <source>
        <tissue>Neurula</tissue>
    </source>
</reference>
<proteinExistence type="evidence at transcript level"/>
<accession>Q28IV6</accession>
<gene>
    <name type="primary">cops3</name>
    <name type="synonym">csn3</name>
    <name type="ORF">TNeu097m08.1</name>
</gene>
<dbReference type="EMBL" id="CR760202">
    <property type="protein sequence ID" value="CAJ83043.1"/>
    <property type="molecule type" value="mRNA"/>
</dbReference>
<dbReference type="RefSeq" id="NP_001017238.1">
    <property type="nucleotide sequence ID" value="NM_001017238.2"/>
</dbReference>
<dbReference type="SMR" id="Q28IV6"/>
<dbReference type="FunCoup" id="Q28IV6">
    <property type="interactions" value="4068"/>
</dbReference>
<dbReference type="STRING" id="8364.ENSXETP00000006828"/>
<dbReference type="PaxDb" id="8364-ENSXETP00000012648"/>
<dbReference type="GeneID" id="549992"/>
<dbReference type="KEGG" id="xtr:549992"/>
<dbReference type="AGR" id="Xenbase:XB-GENE-944158"/>
<dbReference type="CTD" id="8533"/>
<dbReference type="Xenbase" id="XB-GENE-944158">
    <property type="gene designation" value="cops3"/>
</dbReference>
<dbReference type="eggNOG" id="KOG2582">
    <property type="taxonomic scope" value="Eukaryota"/>
</dbReference>
<dbReference type="HOGENOM" id="CLU_028825_0_1_1"/>
<dbReference type="InParanoid" id="Q28IV6"/>
<dbReference type="OMA" id="NHYHDLV"/>
<dbReference type="OrthoDB" id="29061at2759"/>
<dbReference type="PhylomeDB" id="Q28IV6"/>
<dbReference type="TreeFam" id="TF101146"/>
<dbReference type="Reactome" id="R-XTR-5696394">
    <property type="pathway name" value="DNA Damage Recognition in GG-NER"/>
</dbReference>
<dbReference type="Reactome" id="R-XTR-6781823">
    <property type="pathway name" value="Formation of TC-NER Pre-Incision Complex"/>
</dbReference>
<dbReference type="Reactome" id="R-XTR-8951664">
    <property type="pathway name" value="Neddylation"/>
</dbReference>
<dbReference type="Proteomes" id="UP000008143">
    <property type="component" value="Chromosome 9"/>
</dbReference>
<dbReference type="Bgee" id="ENSXETG00000005742">
    <property type="expression patterns" value="Expressed in skeletal muscle tissue and 14 other cell types or tissues"/>
</dbReference>
<dbReference type="GO" id="GO:0008180">
    <property type="term" value="C:COP9 signalosome"/>
    <property type="evidence" value="ECO:0007669"/>
    <property type="project" value="UniProtKB-KW"/>
</dbReference>
<dbReference type="GO" id="GO:0005737">
    <property type="term" value="C:cytoplasm"/>
    <property type="evidence" value="ECO:0007669"/>
    <property type="project" value="UniProtKB-SubCell"/>
</dbReference>
<dbReference type="FunFam" id="1.10.10.10:FF:000354">
    <property type="entry name" value="COP9 signalosome complex subunit 3"/>
    <property type="match status" value="1"/>
</dbReference>
<dbReference type="FunFam" id="1.25.40.570:FF:000008">
    <property type="entry name" value="COP9 signalosome complex subunit 3"/>
    <property type="match status" value="1"/>
</dbReference>
<dbReference type="Gene3D" id="1.25.40.570">
    <property type="match status" value="1"/>
</dbReference>
<dbReference type="InterPro" id="IPR055089">
    <property type="entry name" value="COP9_N"/>
</dbReference>
<dbReference type="InterPro" id="IPR050756">
    <property type="entry name" value="CSN3"/>
</dbReference>
<dbReference type="InterPro" id="IPR048621">
    <property type="entry name" value="CSN3_C"/>
</dbReference>
<dbReference type="InterPro" id="IPR000717">
    <property type="entry name" value="PCI_dom"/>
</dbReference>
<dbReference type="InterPro" id="IPR036390">
    <property type="entry name" value="WH_DNA-bd_sf"/>
</dbReference>
<dbReference type="PANTHER" id="PTHR10758">
    <property type="entry name" value="26S PROTEASOME NON-ATPASE REGULATORY SUBUNIT 3/COP9 SIGNALOSOME COMPLEX SUBUNIT 3"/>
    <property type="match status" value="1"/>
</dbReference>
<dbReference type="PANTHER" id="PTHR10758:SF1">
    <property type="entry name" value="COP9 SIGNALOSOME COMPLEX SUBUNIT 3"/>
    <property type="match status" value="1"/>
</dbReference>
<dbReference type="Pfam" id="PF22788">
    <property type="entry name" value="COP9_hel_rpt"/>
    <property type="match status" value="1"/>
</dbReference>
<dbReference type="Pfam" id="PF21215">
    <property type="entry name" value="CSN3-like_C"/>
    <property type="match status" value="1"/>
</dbReference>
<dbReference type="Pfam" id="PF01399">
    <property type="entry name" value="PCI"/>
    <property type="match status" value="1"/>
</dbReference>
<dbReference type="SMART" id="SM00088">
    <property type="entry name" value="PINT"/>
    <property type="match status" value="1"/>
</dbReference>
<dbReference type="SUPFAM" id="SSF46785">
    <property type="entry name" value="Winged helix' DNA-binding domain"/>
    <property type="match status" value="1"/>
</dbReference>
<dbReference type="PROSITE" id="PS50250">
    <property type="entry name" value="PCI"/>
    <property type="match status" value="1"/>
</dbReference>
<keyword id="KW-0963">Cytoplasm</keyword>
<keyword id="KW-0539">Nucleus</keyword>
<keyword id="KW-1185">Reference proteome</keyword>
<keyword id="KW-0736">Signalosome</keyword>
<protein>
    <recommendedName>
        <fullName>COP9 signalosome complex subunit 3</fullName>
        <shortName>Signalosome subunit 3</shortName>
    </recommendedName>
</protein>
<comment type="function">
    <text evidence="1">Component of the COP9 signalosome complex (CSN), a complex involved in various cellular and developmental processes (By similarity). The CSN complex is an essential regulator of the ubiquitin (Ubl) conjugation pathway by mediating the deneddylation of the cullin subunits of E3 ligase complexes, leading to modify the Ubl ligase activity (By similarity).</text>
</comment>
<comment type="subunit">
    <text evidence="1">Component of the CSN complex, probably composed of cops1, cops2, cops3, cops4, cops5, cops6, cops7, cops8 and cops9.</text>
</comment>
<comment type="subcellular location">
    <subcellularLocation>
        <location evidence="1">Cytoplasm</location>
    </subcellularLocation>
    <subcellularLocation>
        <location evidence="1">Nucleus</location>
    </subcellularLocation>
</comment>
<comment type="similarity">
    <text evidence="4">Belongs to the CSN3 family.</text>
</comment>
<evidence type="ECO:0000250" key="1">
    <source>
        <dbReference type="UniProtKB" id="Q9UNS2"/>
    </source>
</evidence>
<evidence type="ECO:0000255" key="2">
    <source>
        <dbReference type="PROSITE-ProRule" id="PRU01185"/>
    </source>
</evidence>
<evidence type="ECO:0000256" key="3">
    <source>
        <dbReference type="SAM" id="MobiDB-lite"/>
    </source>
</evidence>
<evidence type="ECO:0000305" key="4"/>
<sequence>MASALEQFVNSVRQLSSQGQMTQLCELINKSGELLAKNLSHLDTVLGALDVQEHSLGVLAVLFVKFSMPSIPDFETLFSQVQLFISTCNGEHIRYATDTFAGLCHQLTNALVERKQPLRGICVLRQAIDKMQMNANQLTSIHADLCQLSLLAKCFKPALAYLDVDMMDICKENGAYDAKPFLCYYYYGGMIYTGLKNFERALYFYEQAITTPAMAVSHIMLEAYKKYILVSLILHGKVQQLPKYTSQIVGRFIKPLSNAYHELAQVYSTNNPAELRNLVSKHNETFTRDNNMGLVKQCLSSLYKKNIQRLTKTFLTLSLQDMASRVQLSGAQEAEKYVLYMIEDGEIFASINQKDGMVCFHDNPEKYNNPAMLHNIDQEMLRCIDLDDRLKAMDQEITVNPQFVQKSMGSQDDDSGSKPSSYS</sequence>